<reference key="1">
    <citation type="submission" date="2008-02" db="EMBL/GenBank/DDBJ databases">
        <title>Complete sequence of Yersinia pseudotuberculosis YPIII.</title>
        <authorList>
            <consortium name="US DOE Joint Genome Institute"/>
            <person name="Copeland A."/>
            <person name="Lucas S."/>
            <person name="Lapidus A."/>
            <person name="Glavina del Rio T."/>
            <person name="Dalin E."/>
            <person name="Tice H."/>
            <person name="Bruce D."/>
            <person name="Goodwin L."/>
            <person name="Pitluck S."/>
            <person name="Munk A.C."/>
            <person name="Brettin T."/>
            <person name="Detter J.C."/>
            <person name="Han C."/>
            <person name="Tapia R."/>
            <person name="Schmutz J."/>
            <person name="Larimer F."/>
            <person name="Land M."/>
            <person name="Hauser L."/>
            <person name="Challacombe J.F."/>
            <person name="Green L."/>
            <person name="Lindler L.E."/>
            <person name="Nikolich M.P."/>
            <person name="Richardson P."/>
        </authorList>
    </citation>
    <scope>NUCLEOTIDE SEQUENCE [LARGE SCALE GENOMIC DNA]</scope>
    <source>
        <strain>YPIII</strain>
    </source>
</reference>
<keyword id="KW-0408">Iron</keyword>
<keyword id="KW-0411">Iron-sulfur</keyword>
<keyword id="KW-0479">Metal-binding</keyword>
<organism>
    <name type="scientific">Yersinia pseudotuberculosis serotype O:3 (strain YPIII)</name>
    <dbReference type="NCBI Taxonomy" id="502800"/>
    <lineage>
        <taxon>Bacteria</taxon>
        <taxon>Pseudomonadati</taxon>
        <taxon>Pseudomonadota</taxon>
        <taxon>Gammaproteobacteria</taxon>
        <taxon>Enterobacterales</taxon>
        <taxon>Yersiniaceae</taxon>
        <taxon>Yersinia</taxon>
    </lineage>
</organism>
<accession>B1JK20</accession>
<proteinExistence type="inferred from homology"/>
<protein>
    <recommendedName>
        <fullName evidence="1">Iron-sulfur cluster insertion protein ErpA</fullName>
    </recommendedName>
</protein>
<dbReference type="EMBL" id="CP000950">
    <property type="protein sequence ID" value="ACA69724.1"/>
    <property type="molecule type" value="Genomic_DNA"/>
</dbReference>
<dbReference type="RefSeq" id="WP_002209365.1">
    <property type="nucleotide sequence ID" value="NZ_CP009792.1"/>
</dbReference>
<dbReference type="SMR" id="B1JK20"/>
<dbReference type="GeneID" id="96664241"/>
<dbReference type="KEGG" id="ypy:YPK_3457"/>
<dbReference type="PATRIC" id="fig|502800.11.peg.4198"/>
<dbReference type="GO" id="GO:0005829">
    <property type="term" value="C:cytosol"/>
    <property type="evidence" value="ECO:0007669"/>
    <property type="project" value="TreeGrafter"/>
</dbReference>
<dbReference type="GO" id="GO:0051537">
    <property type="term" value="F:2 iron, 2 sulfur cluster binding"/>
    <property type="evidence" value="ECO:0007669"/>
    <property type="project" value="TreeGrafter"/>
</dbReference>
<dbReference type="GO" id="GO:0051539">
    <property type="term" value="F:4 iron, 4 sulfur cluster binding"/>
    <property type="evidence" value="ECO:0007669"/>
    <property type="project" value="TreeGrafter"/>
</dbReference>
<dbReference type="GO" id="GO:0005506">
    <property type="term" value="F:iron ion binding"/>
    <property type="evidence" value="ECO:0007669"/>
    <property type="project" value="UniProtKB-UniRule"/>
</dbReference>
<dbReference type="GO" id="GO:0016226">
    <property type="term" value="P:iron-sulfur cluster assembly"/>
    <property type="evidence" value="ECO:0007669"/>
    <property type="project" value="UniProtKB-UniRule"/>
</dbReference>
<dbReference type="FunFam" id="2.60.300.12:FF:000002">
    <property type="entry name" value="Iron-sulfur cluster insertion protein ErpA"/>
    <property type="match status" value="1"/>
</dbReference>
<dbReference type="Gene3D" id="2.60.300.12">
    <property type="entry name" value="HesB-like domain"/>
    <property type="match status" value="1"/>
</dbReference>
<dbReference type="HAMAP" id="MF_01380">
    <property type="entry name" value="Fe_S_insert_ErpA"/>
    <property type="match status" value="1"/>
</dbReference>
<dbReference type="InterPro" id="IPR000361">
    <property type="entry name" value="FeS_biogenesis"/>
</dbReference>
<dbReference type="InterPro" id="IPR016092">
    <property type="entry name" value="FeS_cluster_insertion"/>
</dbReference>
<dbReference type="InterPro" id="IPR017870">
    <property type="entry name" value="FeS_cluster_insertion_CS"/>
</dbReference>
<dbReference type="InterPro" id="IPR023063">
    <property type="entry name" value="FeS_cluster_insertion_RrpA"/>
</dbReference>
<dbReference type="InterPro" id="IPR035903">
    <property type="entry name" value="HesB-like_dom_sf"/>
</dbReference>
<dbReference type="NCBIfam" id="TIGR00049">
    <property type="entry name" value="iron-sulfur cluster assembly accessory protein"/>
    <property type="match status" value="1"/>
</dbReference>
<dbReference type="NCBIfam" id="NF010147">
    <property type="entry name" value="PRK13623.1"/>
    <property type="match status" value="1"/>
</dbReference>
<dbReference type="PANTHER" id="PTHR43011">
    <property type="entry name" value="IRON-SULFUR CLUSTER ASSEMBLY 2 HOMOLOG, MITOCHONDRIAL"/>
    <property type="match status" value="1"/>
</dbReference>
<dbReference type="PANTHER" id="PTHR43011:SF1">
    <property type="entry name" value="IRON-SULFUR CLUSTER ASSEMBLY 2 HOMOLOG, MITOCHONDRIAL"/>
    <property type="match status" value="1"/>
</dbReference>
<dbReference type="Pfam" id="PF01521">
    <property type="entry name" value="Fe-S_biosyn"/>
    <property type="match status" value="1"/>
</dbReference>
<dbReference type="SUPFAM" id="SSF89360">
    <property type="entry name" value="HesB-like domain"/>
    <property type="match status" value="1"/>
</dbReference>
<dbReference type="PROSITE" id="PS01152">
    <property type="entry name" value="HESB"/>
    <property type="match status" value="1"/>
</dbReference>
<comment type="function">
    <text evidence="1">Required for insertion of 4Fe-4S clusters for at least IspG.</text>
</comment>
<comment type="cofactor">
    <cofactor evidence="1">
        <name>iron-sulfur cluster</name>
        <dbReference type="ChEBI" id="CHEBI:30408"/>
    </cofactor>
    <text evidence="1">Binds 1 iron-sulfur cluster per subunit.</text>
</comment>
<comment type="subunit">
    <text evidence="1">Homodimer.</text>
</comment>
<comment type="similarity">
    <text evidence="1">Belongs to the HesB/IscA family.</text>
</comment>
<evidence type="ECO:0000255" key="1">
    <source>
        <dbReference type="HAMAP-Rule" id="MF_01380"/>
    </source>
</evidence>
<name>ERPA_YERPY</name>
<sequence length="114" mass="12269">MSNETVLPLQFTEAAAKKVKLLISDEENPNLKLRVYITGGGCSGFQYGFTFDDQVNDGDMTIEKQGVELVVDPMSLQYLVGGAVDYTEGLEGSRFIVTNPNAKSTCGCGSSFSI</sequence>
<gene>
    <name evidence="1" type="primary">erpA</name>
    <name type="ordered locus">YPK_3457</name>
</gene>
<feature type="chain" id="PRO_1000144948" description="Iron-sulfur cluster insertion protein ErpA">
    <location>
        <begin position="1"/>
        <end position="114"/>
    </location>
</feature>
<feature type="binding site" evidence="1">
    <location>
        <position position="42"/>
    </location>
    <ligand>
        <name>iron-sulfur cluster</name>
        <dbReference type="ChEBI" id="CHEBI:30408"/>
    </ligand>
</feature>
<feature type="binding site" evidence="1">
    <location>
        <position position="106"/>
    </location>
    <ligand>
        <name>iron-sulfur cluster</name>
        <dbReference type="ChEBI" id="CHEBI:30408"/>
    </ligand>
</feature>
<feature type="binding site" evidence="1">
    <location>
        <position position="108"/>
    </location>
    <ligand>
        <name>iron-sulfur cluster</name>
        <dbReference type="ChEBI" id="CHEBI:30408"/>
    </ligand>
</feature>